<organism>
    <name type="scientific">Myxococcus xanthus (strain DK1622)</name>
    <dbReference type="NCBI Taxonomy" id="246197"/>
    <lineage>
        <taxon>Bacteria</taxon>
        <taxon>Pseudomonadati</taxon>
        <taxon>Myxococcota</taxon>
        <taxon>Myxococcia</taxon>
        <taxon>Myxococcales</taxon>
        <taxon>Cystobacterineae</taxon>
        <taxon>Myxococcaceae</taxon>
        <taxon>Myxococcus</taxon>
    </lineage>
</organism>
<name>GLGA_MYXXD</name>
<reference key="1">
    <citation type="journal article" date="2006" name="Proc. Natl. Acad. Sci. U.S.A.">
        <title>Evolution of sensory complexity recorded in a myxobacterial genome.</title>
        <authorList>
            <person name="Goldman B.S."/>
            <person name="Nierman W.C."/>
            <person name="Kaiser D."/>
            <person name="Slater S.C."/>
            <person name="Durkin A.S."/>
            <person name="Eisen J.A."/>
            <person name="Ronning C.M."/>
            <person name="Barbazuk W.B."/>
            <person name="Blanchard M."/>
            <person name="Field C."/>
            <person name="Halling C."/>
            <person name="Hinkle G."/>
            <person name="Iartchuk O."/>
            <person name="Kim H.S."/>
            <person name="Mackenzie C."/>
            <person name="Madupu R."/>
            <person name="Miller N."/>
            <person name="Shvartsbeyn A."/>
            <person name="Sullivan S.A."/>
            <person name="Vaudin M."/>
            <person name="Wiegand R."/>
            <person name="Kaplan H.B."/>
        </authorList>
    </citation>
    <scope>NUCLEOTIDE SEQUENCE [LARGE SCALE GENOMIC DNA]</scope>
    <source>
        <strain>DK1622</strain>
    </source>
</reference>
<feature type="chain" id="PRO_1000014369" description="Glycogen synthase">
    <location>
        <begin position="1"/>
        <end position="477"/>
    </location>
</feature>
<feature type="binding site" evidence="1">
    <location>
        <position position="15"/>
    </location>
    <ligand>
        <name>ADP-alpha-D-glucose</name>
        <dbReference type="ChEBI" id="CHEBI:57498"/>
    </ligand>
</feature>
<evidence type="ECO:0000255" key="1">
    <source>
        <dbReference type="HAMAP-Rule" id="MF_00484"/>
    </source>
</evidence>
<accession>Q1DCS0</accession>
<protein>
    <recommendedName>
        <fullName evidence="1">Glycogen synthase</fullName>
        <ecNumber evidence="1">2.4.1.21</ecNumber>
    </recommendedName>
    <alternativeName>
        <fullName evidence="1">Starch [bacterial glycogen] synthase</fullName>
    </alternativeName>
</protein>
<sequence length="477" mass="52120">MNVLFISSEVAPFSKTGGLGDVAGALPAALASLGHDVKVITPRYRDLRGAERLEPTGQSLLLRFPFGELSGPILSARVSERLEVLFLENAFLFGNRHGLYGDAGGAFADNHRRFAYLSVGALQAAQRLRFIPDIIHANDWQTGLVPVALRRGFQTGPLAHAKSVFTIHNLAYQGQFPKDVMGDLALPWDLFTAHDGLEFHDTVNFLKAGLVFSDALTTVSPTYAREIQTPEQGYGLDGLLRHRAHRLHGILNGVDTHEWNPEDDAFLPARYGLKDLSGKAVCKRELLARFGLEDGPAPVFGFVSRLAWQKGMDLLLEALPAALHADIRVVGVGSGEGPLEEGLLALQSRYPKQVGVHIGFDPGLSHLVEAGADFFLMPSRYEPCGLNQMYSLRYGTVPIVRATGGLVDTVEGGLDGNGILFEAFHKSALLAAIRRALALYADPSRLDEFRRRGMEKDFSWGASGRRYEALFHDLVAE</sequence>
<dbReference type="EC" id="2.4.1.21" evidence="1"/>
<dbReference type="EMBL" id="CP000113">
    <property type="protein sequence ID" value="ABF89473.1"/>
    <property type="molecule type" value="Genomic_DNA"/>
</dbReference>
<dbReference type="RefSeq" id="WP_011551413.1">
    <property type="nucleotide sequence ID" value="NC_008095.1"/>
</dbReference>
<dbReference type="SMR" id="Q1DCS0"/>
<dbReference type="STRING" id="246197.MXAN_1296"/>
<dbReference type="CAZy" id="GT5">
    <property type="family name" value="Glycosyltransferase Family 5"/>
</dbReference>
<dbReference type="EnsemblBacteria" id="ABF89473">
    <property type="protein sequence ID" value="ABF89473"/>
    <property type="gene ID" value="MXAN_1296"/>
</dbReference>
<dbReference type="GeneID" id="41358742"/>
<dbReference type="KEGG" id="mxa:MXAN_1296"/>
<dbReference type="eggNOG" id="COG0297">
    <property type="taxonomic scope" value="Bacteria"/>
</dbReference>
<dbReference type="HOGENOM" id="CLU_009583_18_2_7"/>
<dbReference type="OrthoDB" id="9808590at2"/>
<dbReference type="UniPathway" id="UPA00164"/>
<dbReference type="Proteomes" id="UP000002402">
    <property type="component" value="Chromosome"/>
</dbReference>
<dbReference type="GO" id="GO:0005829">
    <property type="term" value="C:cytosol"/>
    <property type="evidence" value="ECO:0007669"/>
    <property type="project" value="TreeGrafter"/>
</dbReference>
<dbReference type="GO" id="GO:0009011">
    <property type="term" value="F:alpha-1,4-glucan glucosyltransferase (ADP-glucose donor) activity"/>
    <property type="evidence" value="ECO:0007669"/>
    <property type="project" value="UniProtKB-UniRule"/>
</dbReference>
<dbReference type="GO" id="GO:0004373">
    <property type="term" value="F:alpha-1,4-glucan glucosyltransferase (UDP-glucose donor) activity"/>
    <property type="evidence" value="ECO:0007669"/>
    <property type="project" value="InterPro"/>
</dbReference>
<dbReference type="GO" id="GO:0005978">
    <property type="term" value="P:glycogen biosynthetic process"/>
    <property type="evidence" value="ECO:0007669"/>
    <property type="project" value="UniProtKB-UniRule"/>
</dbReference>
<dbReference type="CDD" id="cd03791">
    <property type="entry name" value="GT5_Glycogen_synthase_DULL1-like"/>
    <property type="match status" value="1"/>
</dbReference>
<dbReference type="Gene3D" id="3.40.50.2000">
    <property type="entry name" value="Glycogen Phosphorylase B"/>
    <property type="match status" value="2"/>
</dbReference>
<dbReference type="HAMAP" id="MF_00484">
    <property type="entry name" value="Glycogen_synth"/>
    <property type="match status" value="1"/>
</dbReference>
<dbReference type="InterPro" id="IPR001296">
    <property type="entry name" value="Glyco_trans_1"/>
</dbReference>
<dbReference type="InterPro" id="IPR011835">
    <property type="entry name" value="GS/SS"/>
</dbReference>
<dbReference type="InterPro" id="IPR013534">
    <property type="entry name" value="Starch_synth_cat_dom"/>
</dbReference>
<dbReference type="NCBIfam" id="TIGR02095">
    <property type="entry name" value="glgA"/>
    <property type="match status" value="1"/>
</dbReference>
<dbReference type="NCBIfam" id="NF001899">
    <property type="entry name" value="PRK00654.1-2"/>
    <property type="match status" value="1"/>
</dbReference>
<dbReference type="PANTHER" id="PTHR45825:SF11">
    <property type="entry name" value="ALPHA AMYLASE DOMAIN-CONTAINING PROTEIN"/>
    <property type="match status" value="1"/>
</dbReference>
<dbReference type="PANTHER" id="PTHR45825">
    <property type="entry name" value="GRANULE-BOUND STARCH SYNTHASE 1, CHLOROPLASTIC/AMYLOPLASTIC"/>
    <property type="match status" value="1"/>
</dbReference>
<dbReference type="Pfam" id="PF08323">
    <property type="entry name" value="Glyco_transf_5"/>
    <property type="match status" value="1"/>
</dbReference>
<dbReference type="Pfam" id="PF00534">
    <property type="entry name" value="Glycos_transf_1"/>
    <property type="match status" value="1"/>
</dbReference>
<dbReference type="SUPFAM" id="SSF53756">
    <property type="entry name" value="UDP-Glycosyltransferase/glycogen phosphorylase"/>
    <property type="match status" value="1"/>
</dbReference>
<keyword id="KW-0320">Glycogen biosynthesis</keyword>
<keyword id="KW-0328">Glycosyltransferase</keyword>
<keyword id="KW-1185">Reference proteome</keyword>
<keyword id="KW-0808">Transferase</keyword>
<gene>
    <name evidence="1" type="primary">glgA</name>
    <name type="ordered locus">MXAN_1296</name>
</gene>
<proteinExistence type="inferred from homology"/>
<comment type="function">
    <text evidence="1">Synthesizes alpha-1,4-glucan chains using ADP-glucose.</text>
</comment>
<comment type="catalytic activity">
    <reaction evidence="1">
        <text>[(1-&gt;4)-alpha-D-glucosyl](n) + ADP-alpha-D-glucose = [(1-&gt;4)-alpha-D-glucosyl](n+1) + ADP + H(+)</text>
        <dbReference type="Rhea" id="RHEA:18189"/>
        <dbReference type="Rhea" id="RHEA-COMP:9584"/>
        <dbReference type="Rhea" id="RHEA-COMP:9587"/>
        <dbReference type="ChEBI" id="CHEBI:15378"/>
        <dbReference type="ChEBI" id="CHEBI:15444"/>
        <dbReference type="ChEBI" id="CHEBI:57498"/>
        <dbReference type="ChEBI" id="CHEBI:456216"/>
        <dbReference type="EC" id="2.4.1.21"/>
    </reaction>
</comment>
<comment type="pathway">
    <text evidence="1">Glycan biosynthesis; glycogen biosynthesis.</text>
</comment>
<comment type="similarity">
    <text evidence="1">Belongs to the glycosyltransferase 1 family. Bacterial/plant glycogen synthase subfamily.</text>
</comment>